<comment type="function">
    <text evidence="1">Catalyzes the reversible cleavage of L-rhamnulose-1-phosphate to dihydroxyacetone phosphate (DHAP) and L-lactaldehyde.</text>
</comment>
<comment type="catalytic activity">
    <reaction evidence="1">
        <text>L-rhamnulose 1-phosphate = (S)-lactaldehyde + dihydroxyacetone phosphate</text>
        <dbReference type="Rhea" id="RHEA:19689"/>
        <dbReference type="ChEBI" id="CHEBI:18041"/>
        <dbReference type="ChEBI" id="CHEBI:57642"/>
        <dbReference type="ChEBI" id="CHEBI:58313"/>
        <dbReference type="EC" id="4.1.2.19"/>
    </reaction>
</comment>
<comment type="cofactor">
    <cofactor evidence="1">
        <name>Zn(2+)</name>
        <dbReference type="ChEBI" id="CHEBI:29105"/>
    </cofactor>
    <text evidence="1">Binds 1 zinc ion per subunit.</text>
</comment>
<comment type="pathway">
    <text evidence="1">Carbohydrate degradation; L-rhamnose degradation; glycerone phosphate from L-rhamnose: step 3/3.</text>
</comment>
<comment type="subunit">
    <text evidence="1">Homotetramer.</text>
</comment>
<comment type="subcellular location">
    <subcellularLocation>
        <location evidence="1">Cytoplasm</location>
    </subcellularLocation>
</comment>
<comment type="similarity">
    <text evidence="1">Belongs to the aldolase class II family. RhaD subfamily.</text>
</comment>
<sequence length="275" mass="30157">MQNITDSWFVQGMIKATSDAWLKGWDERNGGNLTLRLDEADIAPFAANFHEKPRYIALSQPMPLLANTPFIVTGSGKFFRNVQLDPAANLGVVKIDSDGAGYHILWGLTHDAVPTSELPAHFLSHCERIKATHGKDRVIMHCHATNLIALTYVLENNTALITRKLWEGSTECLVVFPDGVGILPWMVPGTDEIGQATAQEMQKHSLVLWPFHGVFGSGPTLDETFGLIDTAEKSAEVLVKIYSMGGMKQTITREELVALGKRFGVTPLASAVALY</sequence>
<keyword id="KW-0963">Cytoplasm</keyword>
<keyword id="KW-0456">Lyase</keyword>
<keyword id="KW-0479">Metal-binding</keyword>
<keyword id="KW-0684">Rhamnose metabolism</keyword>
<keyword id="KW-0862">Zinc</keyword>
<organism>
    <name type="scientific">Salmonella paratyphi A (strain AKU_12601)</name>
    <dbReference type="NCBI Taxonomy" id="554290"/>
    <lineage>
        <taxon>Bacteria</taxon>
        <taxon>Pseudomonadati</taxon>
        <taxon>Pseudomonadota</taxon>
        <taxon>Gammaproteobacteria</taxon>
        <taxon>Enterobacterales</taxon>
        <taxon>Enterobacteriaceae</taxon>
        <taxon>Salmonella</taxon>
    </lineage>
</organism>
<evidence type="ECO:0000255" key="1">
    <source>
        <dbReference type="HAMAP-Rule" id="MF_00770"/>
    </source>
</evidence>
<gene>
    <name evidence="1" type="primary">rhaD</name>
    <name type="ordered locus">SSPA3616</name>
</gene>
<proteinExistence type="inferred from homology"/>
<feature type="chain" id="PRO_1000193737" description="Rhamnulose-1-phosphate aldolase">
    <location>
        <begin position="1"/>
        <end position="275"/>
    </location>
</feature>
<feature type="active site" evidence="1">
    <location>
        <position position="117"/>
    </location>
</feature>
<feature type="binding site" evidence="1">
    <location>
        <position position="141"/>
    </location>
    <ligand>
        <name>Zn(2+)</name>
        <dbReference type="ChEBI" id="CHEBI:29105"/>
    </ligand>
</feature>
<feature type="binding site" evidence="1">
    <location>
        <position position="143"/>
    </location>
    <ligand>
        <name>Zn(2+)</name>
        <dbReference type="ChEBI" id="CHEBI:29105"/>
    </ligand>
</feature>
<feature type="binding site" evidence="1">
    <location>
        <position position="212"/>
    </location>
    <ligand>
        <name>Zn(2+)</name>
        <dbReference type="ChEBI" id="CHEBI:29105"/>
    </ligand>
</feature>
<dbReference type="EC" id="4.1.2.19" evidence="1"/>
<dbReference type="EMBL" id="FM200053">
    <property type="protein sequence ID" value="CAR61898.1"/>
    <property type="molecule type" value="Genomic_DNA"/>
</dbReference>
<dbReference type="RefSeq" id="WP_001179685.1">
    <property type="nucleotide sequence ID" value="NC_011147.1"/>
</dbReference>
<dbReference type="SMR" id="B5BJG5"/>
<dbReference type="KEGG" id="sek:SSPA3616"/>
<dbReference type="HOGENOM" id="CLU_076831_0_0_6"/>
<dbReference type="UniPathway" id="UPA00541">
    <property type="reaction ID" value="UER00603"/>
</dbReference>
<dbReference type="Proteomes" id="UP000001869">
    <property type="component" value="Chromosome"/>
</dbReference>
<dbReference type="GO" id="GO:0005829">
    <property type="term" value="C:cytosol"/>
    <property type="evidence" value="ECO:0007669"/>
    <property type="project" value="TreeGrafter"/>
</dbReference>
<dbReference type="GO" id="GO:0046872">
    <property type="term" value="F:metal ion binding"/>
    <property type="evidence" value="ECO:0007669"/>
    <property type="project" value="UniProtKB-KW"/>
</dbReference>
<dbReference type="GO" id="GO:0008994">
    <property type="term" value="F:rhamnulose-1-phosphate aldolase activity"/>
    <property type="evidence" value="ECO:0007669"/>
    <property type="project" value="UniProtKB-UniRule"/>
</dbReference>
<dbReference type="GO" id="GO:0019323">
    <property type="term" value="P:pentose catabolic process"/>
    <property type="evidence" value="ECO:0007669"/>
    <property type="project" value="TreeGrafter"/>
</dbReference>
<dbReference type="GO" id="GO:0019301">
    <property type="term" value="P:rhamnose catabolic process"/>
    <property type="evidence" value="ECO:0007669"/>
    <property type="project" value="UniProtKB-UniRule"/>
</dbReference>
<dbReference type="CDD" id="cd00398">
    <property type="entry name" value="Aldolase_II"/>
    <property type="match status" value="1"/>
</dbReference>
<dbReference type="FunFam" id="3.40.225.10:FF:000006">
    <property type="entry name" value="Rhamnulose-1-phosphate aldolase"/>
    <property type="match status" value="1"/>
</dbReference>
<dbReference type="Gene3D" id="3.40.225.10">
    <property type="entry name" value="Class II aldolase/adducin N-terminal domain"/>
    <property type="match status" value="1"/>
</dbReference>
<dbReference type="HAMAP" id="MF_00770">
    <property type="entry name" value="RhaD"/>
    <property type="match status" value="1"/>
</dbReference>
<dbReference type="InterPro" id="IPR050197">
    <property type="entry name" value="Aldolase_class_II_sugar_metab"/>
</dbReference>
<dbReference type="InterPro" id="IPR001303">
    <property type="entry name" value="Aldolase_II/adducin_N"/>
</dbReference>
<dbReference type="InterPro" id="IPR036409">
    <property type="entry name" value="Aldolase_II/adducin_N_sf"/>
</dbReference>
<dbReference type="InterPro" id="IPR013447">
    <property type="entry name" value="Rhamnulose-1-P_Aldolase"/>
</dbReference>
<dbReference type="NCBIfam" id="NF002963">
    <property type="entry name" value="PRK03634.1"/>
    <property type="match status" value="1"/>
</dbReference>
<dbReference type="NCBIfam" id="TIGR02624">
    <property type="entry name" value="rhamnu_1P_ald"/>
    <property type="match status" value="1"/>
</dbReference>
<dbReference type="PANTHER" id="PTHR22789">
    <property type="entry name" value="FUCULOSE PHOSPHATE ALDOLASE"/>
    <property type="match status" value="1"/>
</dbReference>
<dbReference type="PANTHER" id="PTHR22789:SF16">
    <property type="entry name" value="RHAMNULOSE-1-PHOSPHATE ALDOLASE"/>
    <property type="match status" value="1"/>
</dbReference>
<dbReference type="Pfam" id="PF00596">
    <property type="entry name" value="Aldolase_II"/>
    <property type="match status" value="1"/>
</dbReference>
<dbReference type="SMART" id="SM01007">
    <property type="entry name" value="Aldolase_II"/>
    <property type="match status" value="1"/>
</dbReference>
<dbReference type="SUPFAM" id="SSF53639">
    <property type="entry name" value="AraD/HMP-PK domain-like"/>
    <property type="match status" value="1"/>
</dbReference>
<reference key="1">
    <citation type="journal article" date="2009" name="BMC Genomics">
        <title>Pseudogene accumulation in the evolutionary histories of Salmonella enterica serovars Paratyphi A and Typhi.</title>
        <authorList>
            <person name="Holt K.E."/>
            <person name="Thomson N.R."/>
            <person name="Wain J."/>
            <person name="Langridge G.C."/>
            <person name="Hasan R."/>
            <person name="Bhutta Z.A."/>
            <person name="Quail M.A."/>
            <person name="Norbertczak H."/>
            <person name="Walker D."/>
            <person name="Simmonds M."/>
            <person name="White B."/>
            <person name="Bason N."/>
            <person name="Mungall K."/>
            <person name="Dougan G."/>
            <person name="Parkhill J."/>
        </authorList>
    </citation>
    <scope>NUCLEOTIDE SEQUENCE [LARGE SCALE GENOMIC DNA]</scope>
    <source>
        <strain>AKU_12601</strain>
    </source>
</reference>
<name>RHAD_SALPK</name>
<protein>
    <recommendedName>
        <fullName evidence="1">Rhamnulose-1-phosphate aldolase</fullName>
        <ecNumber evidence="1">4.1.2.19</ecNumber>
    </recommendedName>
</protein>
<accession>B5BJG5</accession>